<keyword id="KW-0131">Cell cycle</keyword>
<keyword id="KW-0132">Cell division</keyword>
<keyword id="KW-0195">Cyclin</keyword>
<keyword id="KW-1185">Reference proteome</keyword>
<feature type="chain" id="PRO_0000080413" description="G1/S-specific cyclin CLN3">
    <location>
        <begin position="1"/>
        <end position="580"/>
    </location>
</feature>
<feature type="region of interest" description="Disordered" evidence="1">
    <location>
        <begin position="454"/>
        <end position="498"/>
    </location>
</feature>
<feature type="region of interest" description="Disordered" evidence="1">
    <location>
        <begin position="546"/>
        <end position="580"/>
    </location>
</feature>
<feature type="compositionally biased region" description="Low complexity" evidence="1">
    <location>
        <begin position="454"/>
        <end position="469"/>
    </location>
</feature>
<feature type="compositionally biased region" description="Polar residues" evidence="1">
    <location>
        <begin position="470"/>
        <end position="480"/>
    </location>
</feature>
<feature type="compositionally biased region" description="Polar residues" evidence="1">
    <location>
        <begin position="563"/>
        <end position="580"/>
    </location>
</feature>
<feature type="sequence conflict" description="In Ref. 5; AAU09673." evidence="2" ref="5">
    <original>S</original>
    <variation>P</variation>
    <location>
        <position position="23"/>
    </location>
</feature>
<name>CG13_YEAST</name>
<accession>P13365</accession>
<accession>D6VPH6</accession>
<accession>E9P940</accession>
<evidence type="ECO:0000256" key="1">
    <source>
        <dbReference type="SAM" id="MobiDB-lite"/>
    </source>
</evidence>
<evidence type="ECO:0000305" key="2"/>
<protein>
    <recommendedName>
        <fullName>G1/S-specific cyclin CLN3</fullName>
    </recommendedName>
</protein>
<sequence>MAILKDTIIRYANARYATASGTSTATAASVSAASCPNLPLLLQKRRAIASAKSKNPNLVKRELQAHHSAISEYNNDQLDHYFRLSHTERPLYNLTNFNSQPQVNPKMRFLIFDFIMYCHTRLNLSTSTLFLTFTILDKYSSRFIIKSYNYQLLSLTALWISSKFWDSKNRMATLKVLQNLCCNQYSIKQFTTMEMHLFKSLDWSICQSATFDSYIDIFLFQSTSPLSPGVVLSAPLEAFIQQKLALLNNAAGTAINKSSSSQGPSLNINEIKLGAIMLCELASFNLELSFKYDRSLIALGAINLIKLSLNYYNSNLWENINLALEENCQDLDIKLSEISNTLLDIAMDQNSFPSSFKSKYLNSNKTSLAKSLLDALQNYCIQLKLEEFYRSQELETMYNTIFAQSFDSDSLTCVYSNATTPKSATVSSAATDYFSDHTHLRRLTKDSISPPFAFTPTSSSSSPSPFNSPYKTSSSMTTPDSASHHSHSGSFSSTQNSFKRSLSIPQNSSIFWPSPLTPTTPSLMSNRKLLQNLSVRSKRLFPVRPMATAHPCSAPTQLKKRSTSSVDCDFNDSSNLKKTR</sequence>
<dbReference type="EMBL" id="X13964">
    <property type="protein sequence ID" value="CAA32143.1"/>
    <property type="molecule type" value="Genomic_DNA"/>
</dbReference>
<dbReference type="EMBL" id="M23359">
    <property type="protein sequence ID" value="AAA34552.1"/>
    <property type="molecule type" value="Genomic_DNA"/>
</dbReference>
<dbReference type="EMBL" id="M23359">
    <property type="protein sequence ID" value="AAA34551.1"/>
    <property type="status" value="ALT_TERM"/>
    <property type="molecule type" value="Genomic_DNA"/>
</dbReference>
<dbReference type="EMBL" id="U12980">
    <property type="protein sequence ID" value="AAC04991.1"/>
    <property type="molecule type" value="Genomic_DNA"/>
</dbReference>
<dbReference type="EMBL" id="AY723756">
    <property type="protein sequence ID" value="AAU09673.1"/>
    <property type="molecule type" value="Genomic_DNA"/>
</dbReference>
<dbReference type="EMBL" id="BK006935">
    <property type="protein sequence ID" value="DAA06946.1"/>
    <property type="molecule type" value="Genomic_DNA"/>
</dbReference>
<dbReference type="PIR" id="S14054">
    <property type="entry name" value="S14054"/>
</dbReference>
<dbReference type="RefSeq" id="NP_009360.1">
    <property type="nucleotide sequence ID" value="NM_001178185.1"/>
</dbReference>
<dbReference type="SMR" id="P13365"/>
<dbReference type="BioGRID" id="31725">
    <property type="interactions" value="296"/>
</dbReference>
<dbReference type="ComplexPortal" id="CPX-1700">
    <property type="entry name" value="CLN3-CDC28 kinase complex"/>
</dbReference>
<dbReference type="DIP" id="DIP-1267N"/>
<dbReference type="FunCoup" id="P13365">
    <property type="interactions" value="351"/>
</dbReference>
<dbReference type="IntAct" id="P13365">
    <property type="interactions" value="15"/>
</dbReference>
<dbReference type="MINT" id="P13365"/>
<dbReference type="STRING" id="4932.YAL040C"/>
<dbReference type="iPTMnet" id="P13365"/>
<dbReference type="PaxDb" id="4932-YAL040C"/>
<dbReference type="PeptideAtlas" id="P13365"/>
<dbReference type="EnsemblFungi" id="YAL040C_mRNA">
    <property type="protein sequence ID" value="YAL040C"/>
    <property type="gene ID" value="YAL040C"/>
</dbReference>
<dbReference type="GeneID" id="851191"/>
<dbReference type="KEGG" id="sce:YAL040C"/>
<dbReference type="AGR" id="SGD:S000000038"/>
<dbReference type="SGD" id="S000000038">
    <property type="gene designation" value="CLN3"/>
</dbReference>
<dbReference type="VEuPathDB" id="FungiDB:YAL040C"/>
<dbReference type="eggNOG" id="KOG0653">
    <property type="taxonomic scope" value="Eukaryota"/>
</dbReference>
<dbReference type="HOGENOM" id="CLU_033561_1_0_1"/>
<dbReference type="InParanoid" id="P13365"/>
<dbReference type="OMA" id="FIMYCHT"/>
<dbReference type="OrthoDB" id="5590282at2759"/>
<dbReference type="BioCyc" id="YEAST:G3O-28848-MONOMER"/>
<dbReference type="BioGRID-ORCS" id="851191">
    <property type="hits" value="7 hits in 10 CRISPR screens"/>
</dbReference>
<dbReference type="PRO" id="PR:P13365"/>
<dbReference type="Proteomes" id="UP000002311">
    <property type="component" value="Chromosome I"/>
</dbReference>
<dbReference type="RNAct" id="P13365">
    <property type="molecule type" value="protein"/>
</dbReference>
<dbReference type="GO" id="GO:0000307">
    <property type="term" value="C:cyclin-dependent protein kinase holoenzyme complex"/>
    <property type="evidence" value="ECO:0000353"/>
    <property type="project" value="ComplexPortal"/>
</dbReference>
<dbReference type="GO" id="GO:0005737">
    <property type="term" value="C:cytoplasm"/>
    <property type="evidence" value="ECO:0000318"/>
    <property type="project" value="GO_Central"/>
</dbReference>
<dbReference type="GO" id="GO:0005634">
    <property type="term" value="C:nucleus"/>
    <property type="evidence" value="ECO:0000314"/>
    <property type="project" value="SGD"/>
</dbReference>
<dbReference type="GO" id="GO:0016538">
    <property type="term" value="F:cyclin-dependent protein serine/threonine kinase regulator activity"/>
    <property type="evidence" value="ECO:0000314"/>
    <property type="project" value="SGD"/>
</dbReference>
<dbReference type="GO" id="GO:0051301">
    <property type="term" value="P:cell division"/>
    <property type="evidence" value="ECO:0007669"/>
    <property type="project" value="UniProtKB-KW"/>
</dbReference>
<dbReference type="GO" id="GO:0000082">
    <property type="term" value="P:G1/S transition of mitotic cell cycle"/>
    <property type="evidence" value="ECO:0000315"/>
    <property type="project" value="SGD"/>
</dbReference>
<dbReference type="GO" id="GO:1902806">
    <property type="term" value="P:regulation of cell cycle G1/S phase transition"/>
    <property type="evidence" value="ECO:0000303"/>
    <property type="project" value="ComplexPortal"/>
</dbReference>
<dbReference type="GO" id="GO:0006357">
    <property type="term" value="P:regulation of transcription by RNA polymerase II"/>
    <property type="evidence" value="ECO:0000315"/>
    <property type="project" value="SGD"/>
</dbReference>
<dbReference type="GO" id="GO:0007089">
    <property type="term" value="P:traversing start control point of mitotic cell cycle"/>
    <property type="evidence" value="ECO:0000315"/>
    <property type="project" value="SGD"/>
</dbReference>
<dbReference type="GO" id="GO:0042144">
    <property type="term" value="P:vacuole fusion, non-autophagic"/>
    <property type="evidence" value="ECO:0000314"/>
    <property type="project" value="SGD"/>
</dbReference>
<dbReference type="GO" id="GO:0007033">
    <property type="term" value="P:vacuole organization"/>
    <property type="evidence" value="ECO:0000315"/>
    <property type="project" value="SGD"/>
</dbReference>
<dbReference type="CDD" id="cd20559">
    <property type="entry name" value="CYCLIN_ScCLN_like"/>
    <property type="match status" value="1"/>
</dbReference>
<dbReference type="FunFam" id="1.10.472.10:FF:000131">
    <property type="entry name" value="G1 cyclin"/>
    <property type="match status" value="1"/>
</dbReference>
<dbReference type="Gene3D" id="1.10.472.10">
    <property type="entry name" value="Cyclin-like"/>
    <property type="match status" value="1"/>
</dbReference>
<dbReference type="InterPro" id="IPR039361">
    <property type="entry name" value="Cyclin"/>
</dbReference>
<dbReference type="InterPro" id="IPR013763">
    <property type="entry name" value="Cyclin-like_dom"/>
</dbReference>
<dbReference type="InterPro" id="IPR036915">
    <property type="entry name" value="Cyclin-like_sf"/>
</dbReference>
<dbReference type="InterPro" id="IPR006671">
    <property type="entry name" value="Cyclin_N"/>
</dbReference>
<dbReference type="InterPro" id="IPR048258">
    <property type="entry name" value="Cyclins_cyclin-box"/>
</dbReference>
<dbReference type="PANTHER" id="PTHR10177">
    <property type="entry name" value="CYCLINS"/>
    <property type="match status" value="1"/>
</dbReference>
<dbReference type="Pfam" id="PF00134">
    <property type="entry name" value="Cyclin_N"/>
    <property type="match status" value="1"/>
</dbReference>
<dbReference type="SMART" id="SM00385">
    <property type="entry name" value="CYCLIN"/>
    <property type="match status" value="1"/>
</dbReference>
<dbReference type="SUPFAM" id="SSF47954">
    <property type="entry name" value="Cyclin-like"/>
    <property type="match status" value="1"/>
</dbReference>
<dbReference type="PROSITE" id="PS00292">
    <property type="entry name" value="CYCLINS"/>
    <property type="match status" value="1"/>
</dbReference>
<proteinExistence type="evidence at protein level"/>
<organism>
    <name type="scientific">Saccharomyces cerevisiae (strain ATCC 204508 / S288c)</name>
    <name type="common">Baker's yeast</name>
    <dbReference type="NCBI Taxonomy" id="559292"/>
    <lineage>
        <taxon>Eukaryota</taxon>
        <taxon>Fungi</taxon>
        <taxon>Dikarya</taxon>
        <taxon>Ascomycota</taxon>
        <taxon>Saccharomycotina</taxon>
        <taxon>Saccharomycetes</taxon>
        <taxon>Saccharomycetales</taxon>
        <taxon>Saccharomycetaceae</taxon>
        <taxon>Saccharomyces</taxon>
    </lineage>
</organism>
<reference key="1">
    <citation type="journal article" date="1988" name="EMBO J.">
        <title>The WHI1+ gene of Saccharomyces cerevisiae tethers cell division to cell size and is a cyclin homolog.</title>
        <authorList>
            <person name="Nash R."/>
            <person name="Tokiwa G."/>
            <person name="Anand S."/>
            <person name="Erickson C."/>
            <person name="Futcher A.B."/>
        </authorList>
    </citation>
    <scope>NUCLEOTIDE SEQUENCE [GENOMIC DNA]</scope>
    <source>
        <strain>S673A</strain>
    </source>
</reference>
<reference key="2">
    <citation type="journal article" date="1988" name="Mol. Cell. Biol.">
        <title>DAF1, a mutant gene affecting size control, pheromone arrest, and cell cycle kinetics of Saccharomyces cerevisiae.</title>
        <authorList>
            <person name="Cross F.R."/>
        </authorList>
    </citation>
    <scope>NUCLEOTIDE SEQUENCE [GENOMIC DNA]</scope>
</reference>
<reference key="3">
    <citation type="journal article" date="1995" name="Proc. Natl. Acad. Sci. U.S.A.">
        <title>The nucleotide sequence of chromosome I from Saccharomyces cerevisiae.</title>
        <authorList>
            <person name="Bussey H."/>
            <person name="Kaback D.B."/>
            <person name="Zhong W.-W."/>
            <person name="Vo D.H."/>
            <person name="Clark M.W."/>
            <person name="Fortin N."/>
            <person name="Hall J."/>
            <person name="Ouellette B.F.F."/>
            <person name="Keng T."/>
            <person name="Barton A.B."/>
            <person name="Su Y."/>
            <person name="Davies C.J."/>
            <person name="Storms R.K."/>
        </authorList>
    </citation>
    <scope>NUCLEOTIDE SEQUENCE [LARGE SCALE GENOMIC DNA]</scope>
    <source>
        <strain>ATCC 204508 / S288c</strain>
    </source>
</reference>
<reference key="4">
    <citation type="journal article" date="2014" name="G3 (Bethesda)">
        <title>The reference genome sequence of Saccharomyces cerevisiae: Then and now.</title>
        <authorList>
            <person name="Engel S.R."/>
            <person name="Dietrich F.S."/>
            <person name="Fisk D.G."/>
            <person name="Binkley G."/>
            <person name="Balakrishnan R."/>
            <person name="Costanzo M.C."/>
            <person name="Dwight S.S."/>
            <person name="Hitz B.C."/>
            <person name="Karra K."/>
            <person name="Nash R.S."/>
            <person name="Weng S."/>
            <person name="Wong E.D."/>
            <person name="Lloyd P."/>
            <person name="Skrzypek M.S."/>
            <person name="Miyasato S.R."/>
            <person name="Simison M."/>
            <person name="Cherry J.M."/>
        </authorList>
    </citation>
    <scope>GENOME REANNOTATION</scope>
    <source>
        <strain>ATCC 204508 / S288c</strain>
    </source>
</reference>
<reference key="5">
    <citation type="journal article" date="2007" name="Genome Res.">
        <title>Approaching a complete repository of sequence-verified protein-encoding clones for Saccharomyces cerevisiae.</title>
        <authorList>
            <person name="Hu Y."/>
            <person name="Rolfs A."/>
            <person name="Bhullar B."/>
            <person name="Murthy T.V.S."/>
            <person name="Zhu C."/>
            <person name="Berger M.F."/>
            <person name="Camargo A.A."/>
            <person name="Kelley F."/>
            <person name="McCarron S."/>
            <person name="Jepson D."/>
            <person name="Richardson A."/>
            <person name="Raphael J."/>
            <person name="Moreira D."/>
            <person name="Taycher E."/>
            <person name="Zuo D."/>
            <person name="Mohr S."/>
            <person name="Kane M.F."/>
            <person name="Williamson J."/>
            <person name="Simpson A.J.G."/>
            <person name="Bulyk M.L."/>
            <person name="Harlow E."/>
            <person name="Marsischky G."/>
            <person name="Kolodner R.D."/>
            <person name="LaBaer J."/>
        </authorList>
    </citation>
    <scope>NUCLEOTIDE SEQUENCE [GENOMIC DNA]</scope>
    <source>
        <strain>ATCC 204508 / S288c</strain>
    </source>
</reference>
<comment type="function">
    <text>Essential for the control of the cell cycle at the G1/S (start) transition. CLN3 may be an upstream activator of the G1 cyclins which directly catalyze start.</text>
</comment>
<comment type="interaction">
    <interactant intactId="EBI-4490">
        <id>P13365</id>
    </interactant>
    <interactant intactId="EBI-4253">
        <id>P00546</id>
        <label>CDC28</label>
    </interactant>
    <organismsDiffer>false</organismsDiffer>
    <experiments>6</experiments>
</comment>
<comment type="interaction">
    <interactant intactId="EBI-4490">
        <id>P13365</id>
    </interactant>
    <interactant intactId="EBI-18641">
        <id>P09959</id>
        <label>SWI6</label>
    </interactant>
    <organismsDiffer>false</organismsDiffer>
    <experiments>2</experiments>
</comment>
<comment type="induction">
    <text>Not significantly cell cycle regulated.</text>
</comment>
<comment type="similarity">
    <text evidence="2">Belongs to the cyclin family.</text>
</comment>
<gene>
    <name type="primary">CLN3</name>
    <name type="synonym">DAF1</name>
    <name type="synonym">WHI1</name>
    <name type="ordered locus">YAL040C</name>
    <name type="ORF">FUN10</name>
</gene>